<keyword id="KW-0031">Aminopeptidase</keyword>
<keyword id="KW-0963">Cytoplasm</keyword>
<keyword id="KW-0378">Hydrolase</keyword>
<keyword id="KW-0464">Manganese</keyword>
<keyword id="KW-0479">Metal-binding</keyword>
<keyword id="KW-0645">Protease</keyword>
<keyword id="KW-1185">Reference proteome</keyword>
<protein>
    <recommendedName>
        <fullName evidence="1">Probable cytosol aminopeptidase</fullName>
        <ecNumber evidence="1">3.4.11.1</ecNumber>
    </recommendedName>
    <alternativeName>
        <fullName evidence="1">Leucine aminopeptidase</fullName>
        <shortName evidence="1">LAP</shortName>
        <ecNumber evidence="1">3.4.11.10</ecNumber>
    </alternativeName>
    <alternativeName>
        <fullName evidence="1">Leucyl aminopeptidase</fullName>
    </alternativeName>
</protein>
<evidence type="ECO:0000255" key="1">
    <source>
        <dbReference type="HAMAP-Rule" id="MF_00181"/>
    </source>
</evidence>
<proteinExistence type="inferred from homology"/>
<feature type="chain" id="PRO_1000077282" description="Probable cytosol aminopeptidase">
    <location>
        <begin position="1"/>
        <end position="503"/>
    </location>
</feature>
<feature type="active site" evidence="1">
    <location>
        <position position="282"/>
    </location>
</feature>
<feature type="active site" evidence="1">
    <location>
        <position position="356"/>
    </location>
</feature>
<feature type="binding site" evidence="1">
    <location>
        <position position="270"/>
    </location>
    <ligand>
        <name>Mn(2+)</name>
        <dbReference type="ChEBI" id="CHEBI:29035"/>
        <label>2</label>
    </ligand>
</feature>
<feature type="binding site" evidence="1">
    <location>
        <position position="275"/>
    </location>
    <ligand>
        <name>Mn(2+)</name>
        <dbReference type="ChEBI" id="CHEBI:29035"/>
        <label>1</label>
    </ligand>
</feature>
<feature type="binding site" evidence="1">
    <location>
        <position position="275"/>
    </location>
    <ligand>
        <name>Mn(2+)</name>
        <dbReference type="ChEBI" id="CHEBI:29035"/>
        <label>2</label>
    </ligand>
</feature>
<feature type="binding site" evidence="1">
    <location>
        <position position="293"/>
    </location>
    <ligand>
        <name>Mn(2+)</name>
        <dbReference type="ChEBI" id="CHEBI:29035"/>
        <label>2</label>
    </ligand>
</feature>
<feature type="binding site" evidence="1">
    <location>
        <position position="352"/>
    </location>
    <ligand>
        <name>Mn(2+)</name>
        <dbReference type="ChEBI" id="CHEBI:29035"/>
        <label>1</label>
    </ligand>
</feature>
<feature type="binding site" evidence="1">
    <location>
        <position position="354"/>
    </location>
    <ligand>
        <name>Mn(2+)</name>
        <dbReference type="ChEBI" id="CHEBI:29035"/>
        <label>1</label>
    </ligand>
</feature>
<feature type="binding site" evidence="1">
    <location>
        <position position="354"/>
    </location>
    <ligand>
        <name>Mn(2+)</name>
        <dbReference type="ChEBI" id="CHEBI:29035"/>
        <label>2</label>
    </ligand>
</feature>
<accession>A9MET9</accession>
<gene>
    <name evidence="1" type="primary">pepA</name>
    <name type="ordered locus">SARI_03166</name>
</gene>
<comment type="function">
    <text evidence="1">Presumably involved in the processing and regular turnover of intracellular proteins. Catalyzes the removal of unsubstituted N-terminal amino acids from various peptides.</text>
</comment>
<comment type="catalytic activity">
    <reaction evidence="1">
        <text>Release of an N-terminal amino acid, Xaa-|-Yaa-, in which Xaa is preferably Leu, but may be other amino acids including Pro although not Arg or Lys, and Yaa may be Pro. Amino acid amides and methyl esters are also readily hydrolyzed, but rates on arylamides are exceedingly low.</text>
        <dbReference type="EC" id="3.4.11.1"/>
    </reaction>
</comment>
<comment type="catalytic activity">
    <reaction evidence="1">
        <text>Release of an N-terminal amino acid, preferentially leucine, but not glutamic or aspartic acids.</text>
        <dbReference type="EC" id="3.4.11.10"/>
    </reaction>
</comment>
<comment type="cofactor">
    <cofactor evidence="1">
        <name>Mn(2+)</name>
        <dbReference type="ChEBI" id="CHEBI:29035"/>
    </cofactor>
    <text evidence="1">Binds 2 manganese ions per subunit.</text>
</comment>
<comment type="subcellular location">
    <subcellularLocation>
        <location evidence="1">Cytoplasm</location>
    </subcellularLocation>
</comment>
<comment type="similarity">
    <text evidence="1">Belongs to the peptidase M17 family.</text>
</comment>
<dbReference type="EC" id="3.4.11.1" evidence="1"/>
<dbReference type="EC" id="3.4.11.10" evidence="1"/>
<dbReference type="EMBL" id="CP000880">
    <property type="protein sequence ID" value="ABX23005.1"/>
    <property type="molecule type" value="Genomic_DNA"/>
</dbReference>
<dbReference type="SMR" id="A9MET9"/>
<dbReference type="STRING" id="41514.SARI_03166"/>
<dbReference type="MEROPS" id="M17.003"/>
<dbReference type="KEGG" id="ses:SARI_03166"/>
<dbReference type="HOGENOM" id="CLU_013734_2_2_6"/>
<dbReference type="Proteomes" id="UP000002084">
    <property type="component" value="Chromosome"/>
</dbReference>
<dbReference type="GO" id="GO:0005737">
    <property type="term" value="C:cytoplasm"/>
    <property type="evidence" value="ECO:0007669"/>
    <property type="project" value="UniProtKB-SubCell"/>
</dbReference>
<dbReference type="GO" id="GO:0030145">
    <property type="term" value="F:manganese ion binding"/>
    <property type="evidence" value="ECO:0007669"/>
    <property type="project" value="UniProtKB-UniRule"/>
</dbReference>
<dbReference type="GO" id="GO:0070006">
    <property type="term" value="F:metalloaminopeptidase activity"/>
    <property type="evidence" value="ECO:0007669"/>
    <property type="project" value="InterPro"/>
</dbReference>
<dbReference type="GO" id="GO:0006508">
    <property type="term" value="P:proteolysis"/>
    <property type="evidence" value="ECO:0007669"/>
    <property type="project" value="UniProtKB-KW"/>
</dbReference>
<dbReference type="CDD" id="cd00433">
    <property type="entry name" value="Peptidase_M17"/>
    <property type="match status" value="1"/>
</dbReference>
<dbReference type="FunFam" id="3.40.220.10:FF:000001">
    <property type="entry name" value="Probable cytosol aminopeptidase"/>
    <property type="match status" value="1"/>
</dbReference>
<dbReference type="FunFam" id="3.40.630.10:FF:000004">
    <property type="entry name" value="Probable cytosol aminopeptidase"/>
    <property type="match status" value="1"/>
</dbReference>
<dbReference type="Gene3D" id="3.40.220.10">
    <property type="entry name" value="Leucine Aminopeptidase, subunit E, domain 1"/>
    <property type="match status" value="1"/>
</dbReference>
<dbReference type="Gene3D" id="3.40.630.10">
    <property type="entry name" value="Zn peptidases"/>
    <property type="match status" value="1"/>
</dbReference>
<dbReference type="HAMAP" id="MF_00181">
    <property type="entry name" value="Cytosol_peptidase_M17"/>
    <property type="match status" value="1"/>
</dbReference>
<dbReference type="InterPro" id="IPR011356">
    <property type="entry name" value="Leucine_aapep/pepB"/>
</dbReference>
<dbReference type="InterPro" id="IPR043472">
    <property type="entry name" value="Macro_dom-like"/>
</dbReference>
<dbReference type="InterPro" id="IPR000819">
    <property type="entry name" value="Peptidase_M17_C"/>
</dbReference>
<dbReference type="InterPro" id="IPR023042">
    <property type="entry name" value="Peptidase_M17_leu_NH2_pept"/>
</dbReference>
<dbReference type="InterPro" id="IPR008283">
    <property type="entry name" value="Peptidase_M17_N"/>
</dbReference>
<dbReference type="NCBIfam" id="NF002072">
    <property type="entry name" value="PRK00913.1-1"/>
    <property type="match status" value="1"/>
</dbReference>
<dbReference type="NCBIfam" id="NF002073">
    <property type="entry name" value="PRK00913.1-2"/>
    <property type="match status" value="1"/>
</dbReference>
<dbReference type="NCBIfam" id="NF002074">
    <property type="entry name" value="PRK00913.1-4"/>
    <property type="match status" value="1"/>
</dbReference>
<dbReference type="PANTHER" id="PTHR11963:SF23">
    <property type="entry name" value="CYTOSOL AMINOPEPTIDASE"/>
    <property type="match status" value="1"/>
</dbReference>
<dbReference type="PANTHER" id="PTHR11963">
    <property type="entry name" value="LEUCINE AMINOPEPTIDASE-RELATED"/>
    <property type="match status" value="1"/>
</dbReference>
<dbReference type="Pfam" id="PF00883">
    <property type="entry name" value="Peptidase_M17"/>
    <property type="match status" value="1"/>
</dbReference>
<dbReference type="Pfam" id="PF02789">
    <property type="entry name" value="Peptidase_M17_N"/>
    <property type="match status" value="1"/>
</dbReference>
<dbReference type="PRINTS" id="PR00481">
    <property type="entry name" value="LAMNOPPTDASE"/>
</dbReference>
<dbReference type="SUPFAM" id="SSF52949">
    <property type="entry name" value="Macro domain-like"/>
    <property type="match status" value="1"/>
</dbReference>
<dbReference type="SUPFAM" id="SSF53187">
    <property type="entry name" value="Zn-dependent exopeptidases"/>
    <property type="match status" value="1"/>
</dbReference>
<dbReference type="PROSITE" id="PS00631">
    <property type="entry name" value="CYTOSOL_AP"/>
    <property type="match status" value="1"/>
</dbReference>
<reference key="1">
    <citation type="submission" date="2007-11" db="EMBL/GenBank/DDBJ databases">
        <authorList>
            <consortium name="The Salmonella enterica serovar Arizonae Genome Sequencing Project"/>
            <person name="McClelland M."/>
            <person name="Sanderson E.K."/>
            <person name="Porwollik S."/>
            <person name="Spieth J."/>
            <person name="Clifton W.S."/>
            <person name="Fulton R."/>
            <person name="Chunyan W."/>
            <person name="Wollam A."/>
            <person name="Shah N."/>
            <person name="Pepin K."/>
            <person name="Bhonagiri V."/>
            <person name="Nash W."/>
            <person name="Johnson M."/>
            <person name="Thiruvilangam P."/>
            <person name="Wilson R."/>
        </authorList>
    </citation>
    <scope>NUCLEOTIDE SEQUENCE [LARGE SCALE GENOMIC DNA]</scope>
    <source>
        <strain>ATCC BAA-731 / CDC346-86 / RSK2980</strain>
    </source>
</reference>
<sequence length="503" mass="54920">MEFSVKSGSPEKQRSACIVVGVFEPRRLSPIAEQLDKISDGYISALLRRGELEGKPGQTLLLHHVPNVLSERILLIGCGKERELDERQYKQVIQKTINTLNDTGSMEAVCFLTELHVKGRNNYWKVRQAVETAKETLYSFDQLKTNKSEPRRPLRKMVFNVPTRRELTSGERAIQHGLAIAAGIKAAKDLGNMPPNICNAAYLASQARQLADSYSKKVITRVIGEQQMRELGMNAYLAVGHGSQNESLMSVIEYKGNPSEDARPIVLVGKGLTFDSGGISIKPSEGMDEMKYDMCGAAAVYGVMRMVAELQLPINVIGVLAGCENMPGGRAYRPGDVLTTMSGQTVEVLNTDAEGRLVLCDVLTYVERFEPEAVIDVATLTGACVIALGHHITGLMSNHNPLAHELLGASEQAGDRAWRLPLGDEYQEQLESNFADMANIGGRPGGAITAGCFLSRFTRKYNWAHLDIAGTAWRSGKAKGATGRPVALLSQFLLNRAGFNGEE</sequence>
<name>AMPA_SALAR</name>
<organism>
    <name type="scientific">Salmonella arizonae (strain ATCC BAA-731 / CDC346-86 / RSK2980)</name>
    <dbReference type="NCBI Taxonomy" id="41514"/>
    <lineage>
        <taxon>Bacteria</taxon>
        <taxon>Pseudomonadati</taxon>
        <taxon>Pseudomonadota</taxon>
        <taxon>Gammaproteobacteria</taxon>
        <taxon>Enterobacterales</taxon>
        <taxon>Enterobacteriaceae</taxon>
        <taxon>Salmonella</taxon>
    </lineage>
</organism>